<organism>
    <name type="scientific">Mus musculus</name>
    <name type="common">Mouse</name>
    <dbReference type="NCBI Taxonomy" id="10090"/>
    <lineage>
        <taxon>Eukaryota</taxon>
        <taxon>Metazoa</taxon>
        <taxon>Chordata</taxon>
        <taxon>Craniata</taxon>
        <taxon>Vertebrata</taxon>
        <taxon>Euteleostomi</taxon>
        <taxon>Mammalia</taxon>
        <taxon>Eutheria</taxon>
        <taxon>Euarchontoglires</taxon>
        <taxon>Glires</taxon>
        <taxon>Rodentia</taxon>
        <taxon>Myomorpha</taxon>
        <taxon>Muroidea</taxon>
        <taxon>Muridae</taxon>
        <taxon>Murinae</taxon>
        <taxon>Mus</taxon>
        <taxon>Mus</taxon>
    </lineage>
</organism>
<sequence length="675" mass="75508">MGSNQDFRNLQAKFQTSQPELGELFRKTPKPELNKVLKKFPQTELSEQPKKSSQSELSAVSLKPLQLQFADLPRKPPQPGVLKKSPQPEFPHLANKPVQAEFPRKPLHPEFTGLKKPSQAEFTDLKKPPQPQFASLPKKPPKPEFGELSKRPPQLETPQEPSAPPAQKLLKPEPNNPARPLGELKPKMFWHLEANEAPKRPLPSESSTFPKKPLQPEAVVGFSRKSQPQSESIEVSQTSPSKCGSRELDSHSPQPDISTFPKNNENFRKPSYPQATGCPKSPKQPMFYEFPQTPPRKPESCNPQSHSPLPDFNAFPKKHPQLQPSDLTRASSEPEVCKVPKKTQKPDPNVLSQKPSQPELGHLPRTSSDPEFNSLPRKFLQPQHGKFFQPEFPKGLPRKPKLPGSVSECSLPSASAGSSPQCPLSPGLIVPGIPRWRSEDFQVQRPPRRRPLPSASSLGHPPAKPALPPGPINIQSFRRAAATAAAVLKTGSSTGTHFQAQQPQHIAQNPDEIYELYDAVEATDDSSISPRGRDEMLSTQQATRWPQQEPELRKKATQPQQLPATDPKLLKQIRKAEKAEREFRKKFKFEGEIVIHTKMMIDPNAKTRRGGGKHLGIRRGEILEVIEFTSKDEMLCRDPKGKYGYVPRTALLPLETEVYDDVSFGDPLDMQPFPR</sequence>
<keyword id="KW-0446">Lipid-binding</keyword>
<keyword id="KW-0597">Phosphoprotein</keyword>
<keyword id="KW-1185">Reference proteome</keyword>
<keyword id="KW-0728">SH3 domain</keyword>
<comment type="function">
    <text evidence="4">May be involved in integrin signaling in neutrophils. Binds to PtdIns(4)P.</text>
</comment>
<comment type="subunit">
    <text evidence="1">Interacts with SKAP2, LCP2 and DBNL. May interact with LYN (By similarity). Interacts with NEK6 (By similarity).</text>
</comment>
<comment type="tissue specificity">
    <text evidence="4">Expressed in bone marrow and mature neutrophils. Weakly expressed in macrophages and mast cells.</text>
</comment>
<comment type="domain">
    <text evidence="1">The SH3 domain binds to PtdIns(4)P.</text>
</comment>
<comment type="PTM">
    <text evidence="1">May be phosphorylated on tyrosines.</text>
</comment>
<comment type="disruption phenotype">
    <text evidence="4">Mice are healthy and do not display any obvious abnormality. They have normal hematopoietic differentiation.</text>
</comment>
<dbReference type="EMBL" id="AY665714">
    <property type="protein sequence ID" value="AAT76049.1"/>
    <property type="molecule type" value="mRNA"/>
</dbReference>
<dbReference type="EMBL" id="CT033847">
    <property type="status" value="NOT_ANNOTATED_CDS"/>
    <property type="molecule type" value="Genomic_DNA"/>
</dbReference>
<dbReference type="CCDS" id="CCDS37569.1"/>
<dbReference type="RefSeq" id="NP_001002842.2">
    <property type="nucleotide sequence ID" value="NM_001002842.2"/>
</dbReference>
<dbReference type="SMR" id="Q6BCL1"/>
<dbReference type="STRING" id="10090.ENSMUSP00000057065"/>
<dbReference type="iPTMnet" id="Q6BCL1"/>
<dbReference type="PhosphoSitePlus" id="Q6BCL1"/>
<dbReference type="PaxDb" id="10090-ENSMUSP00000057065"/>
<dbReference type="ProteomicsDB" id="289883"/>
<dbReference type="Antibodypedia" id="24911">
    <property type="antibodies" value="119 antibodies from 25 providers"/>
</dbReference>
<dbReference type="DNASU" id="378460"/>
<dbReference type="Ensembl" id="ENSMUST00000052079.8">
    <property type="protein sequence ID" value="ENSMUSP00000057065.8"/>
    <property type="gene ID" value="ENSMUSG00000032739.17"/>
</dbReference>
<dbReference type="GeneID" id="378460"/>
<dbReference type="KEGG" id="mmu:378460"/>
<dbReference type="UCSC" id="uc008byz.1">
    <property type="organism name" value="mouse"/>
</dbReference>
<dbReference type="AGR" id="MGI:3576625"/>
<dbReference type="CTD" id="84106"/>
<dbReference type="MGI" id="MGI:3576625">
    <property type="gene designation" value="Pram1"/>
</dbReference>
<dbReference type="VEuPathDB" id="HostDB:ENSMUSG00000032739"/>
<dbReference type="eggNOG" id="ENOG502SS22">
    <property type="taxonomic scope" value="Eukaryota"/>
</dbReference>
<dbReference type="GeneTree" id="ENSGT00530000063460"/>
<dbReference type="HOGENOM" id="CLU_460488_0_0_1"/>
<dbReference type="InParanoid" id="Q6BCL1"/>
<dbReference type="OMA" id="HTRMMID"/>
<dbReference type="OrthoDB" id="8889279at2759"/>
<dbReference type="PhylomeDB" id="Q6BCL1"/>
<dbReference type="TreeFam" id="TF337003"/>
<dbReference type="BioGRID-ORCS" id="378460">
    <property type="hits" value="1 hit in 77 CRISPR screens"/>
</dbReference>
<dbReference type="ChiTaRS" id="Pram1">
    <property type="organism name" value="mouse"/>
</dbReference>
<dbReference type="PRO" id="PR:Q6BCL1"/>
<dbReference type="Proteomes" id="UP000000589">
    <property type="component" value="Chromosome 17"/>
</dbReference>
<dbReference type="RNAct" id="Q6BCL1">
    <property type="molecule type" value="protein"/>
</dbReference>
<dbReference type="Bgee" id="ENSMUSG00000032739">
    <property type="expression patterns" value="Expressed in granulocyte and 59 other cell types or tissues"/>
</dbReference>
<dbReference type="ExpressionAtlas" id="Q6BCL1">
    <property type="expression patterns" value="baseline and differential"/>
</dbReference>
<dbReference type="GO" id="GO:0005886">
    <property type="term" value="C:plasma membrane"/>
    <property type="evidence" value="ECO:0007669"/>
    <property type="project" value="InterPro"/>
</dbReference>
<dbReference type="GO" id="GO:0032991">
    <property type="term" value="C:protein-containing complex"/>
    <property type="evidence" value="ECO:0007669"/>
    <property type="project" value="Ensembl"/>
</dbReference>
<dbReference type="GO" id="GO:0008289">
    <property type="term" value="F:lipid binding"/>
    <property type="evidence" value="ECO:0007669"/>
    <property type="project" value="UniProtKB-KW"/>
</dbReference>
<dbReference type="GO" id="GO:0019901">
    <property type="term" value="F:protein kinase binding"/>
    <property type="evidence" value="ECO:0007669"/>
    <property type="project" value="Ensembl"/>
</dbReference>
<dbReference type="GO" id="GO:0007229">
    <property type="term" value="P:integrin-mediated signaling pathway"/>
    <property type="evidence" value="ECO:0000315"/>
    <property type="project" value="MGI"/>
</dbReference>
<dbReference type="GO" id="GO:0043313">
    <property type="term" value="P:regulation of neutrophil degranulation"/>
    <property type="evidence" value="ECO:0000315"/>
    <property type="project" value="MGI"/>
</dbReference>
<dbReference type="FunFam" id="2.30.30.40:FF:000179">
    <property type="entry name" value="PML-RARA regulated adaptor molecule 1"/>
    <property type="match status" value="1"/>
</dbReference>
<dbReference type="Gene3D" id="2.30.30.40">
    <property type="entry name" value="SH3 Domains"/>
    <property type="match status" value="1"/>
</dbReference>
<dbReference type="InterPro" id="IPR043443">
    <property type="entry name" value="FYB1/2-like"/>
</dbReference>
<dbReference type="InterPro" id="IPR029294">
    <property type="entry name" value="hSH3"/>
</dbReference>
<dbReference type="InterPro" id="IPR036028">
    <property type="entry name" value="SH3-like_dom_sf"/>
</dbReference>
<dbReference type="InterPro" id="IPR001452">
    <property type="entry name" value="SH3_domain"/>
</dbReference>
<dbReference type="PANTHER" id="PTHR16830:SF11">
    <property type="entry name" value="PML-RARA-REGULATED ADAPTER MOLECULE 1"/>
    <property type="match status" value="1"/>
</dbReference>
<dbReference type="PANTHER" id="PTHR16830">
    <property type="entry name" value="SH2 CONTAINING ADAPTOR PRAM-1 RELATED"/>
    <property type="match status" value="1"/>
</dbReference>
<dbReference type="Pfam" id="PF14603">
    <property type="entry name" value="hSH3"/>
    <property type="match status" value="1"/>
</dbReference>
<dbReference type="SUPFAM" id="SSF50044">
    <property type="entry name" value="SH3-domain"/>
    <property type="match status" value="1"/>
</dbReference>
<dbReference type="PROSITE" id="PS50002">
    <property type="entry name" value="SH3"/>
    <property type="match status" value="1"/>
</dbReference>
<proteinExistence type="evidence at protein level"/>
<gene>
    <name type="primary">Pram1</name>
</gene>
<evidence type="ECO:0000250" key="1"/>
<evidence type="ECO:0000255" key="2">
    <source>
        <dbReference type="PROSITE-ProRule" id="PRU00192"/>
    </source>
</evidence>
<evidence type="ECO:0000256" key="3">
    <source>
        <dbReference type="SAM" id="MobiDB-lite"/>
    </source>
</evidence>
<evidence type="ECO:0000269" key="4">
    <source>
    </source>
</evidence>
<evidence type="ECO:0000305" key="5"/>
<evidence type="ECO:0007744" key="6">
    <source>
    </source>
</evidence>
<accession>Q6BCL1</accession>
<accession>E9QL42</accession>
<feature type="chain" id="PRO_0000270172" description="PML-RARA-regulated adapter molecule 1">
    <location>
        <begin position="1"/>
        <end position="675"/>
    </location>
</feature>
<feature type="domain" description="SH3" evidence="2">
    <location>
        <begin position="578"/>
        <end position="656"/>
    </location>
</feature>
<feature type="region of interest" description="Disordered" evidence="3">
    <location>
        <begin position="1"/>
        <end position="473"/>
    </location>
</feature>
<feature type="region of interest" description="Disordered" evidence="3">
    <location>
        <begin position="523"/>
        <end position="562"/>
    </location>
</feature>
<feature type="compositionally biased region" description="Polar residues" evidence="3">
    <location>
        <begin position="1"/>
        <end position="19"/>
    </location>
</feature>
<feature type="compositionally biased region" description="Basic and acidic residues" evidence="3">
    <location>
        <begin position="23"/>
        <end position="35"/>
    </location>
</feature>
<feature type="compositionally biased region" description="Polar residues" evidence="3">
    <location>
        <begin position="43"/>
        <end position="58"/>
    </location>
</feature>
<feature type="compositionally biased region" description="Basic and acidic residues" evidence="3">
    <location>
        <begin position="141"/>
        <end position="150"/>
    </location>
</feature>
<feature type="compositionally biased region" description="Polar residues" evidence="3">
    <location>
        <begin position="224"/>
        <end position="242"/>
    </location>
</feature>
<feature type="compositionally biased region" description="Polar residues" evidence="3">
    <location>
        <begin position="251"/>
        <end position="264"/>
    </location>
</feature>
<feature type="compositionally biased region" description="Polar residues" evidence="3">
    <location>
        <begin position="322"/>
        <end position="331"/>
    </location>
</feature>
<feature type="compositionally biased region" description="Polar residues" evidence="3">
    <location>
        <begin position="407"/>
        <end position="422"/>
    </location>
</feature>
<feature type="compositionally biased region" description="Pro residues" evidence="3">
    <location>
        <begin position="462"/>
        <end position="471"/>
    </location>
</feature>
<feature type="compositionally biased region" description="Polar residues" evidence="3">
    <location>
        <begin position="537"/>
        <end position="546"/>
    </location>
</feature>
<feature type="modified residue" description="Phosphoserine" evidence="6">
    <location>
        <position position="374"/>
    </location>
</feature>
<feature type="sequence conflict" description="In Ref. 1; AAT76049." evidence="5" ref="1">
    <original>L</original>
    <variation>P</variation>
    <location>
        <position position="537"/>
    </location>
</feature>
<protein>
    <recommendedName>
        <fullName>PML-RARA-regulated adapter molecule 1</fullName>
        <shortName>PRAM-1</shortName>
    </recommendedName>
</protein>
<reference key="1">
    <citation type="journal article" date="2004" name="Mol. Cell. Biol.">
        <title>PRAM-1 is required for optimal integrin-dependent neutrophil function.</title>
        <authorList>
            <person name="Clemens R.A."/>
            <person name="Newbrough S.A."/>
            <person name="Chung E.Y."/>
            <person name="Gheith S."/>
            <person name="Singer A.L."/>
            <person name="Koretzky G.A."/>
            <person name="Peterson E.J."/>
        </authorList>
    </citation>
    <scope>NUCLEOTIDE SEQUENCE [MRNA]</scope>
    <scope>TISSUE SPECIFICITY</scope>
    <scope>FUNCTION</scope>
    <scope>DISRUPTION PHENOTYPE</scope>
    <source>
        <strain>C57BL/6J</strain>
    </source>
</reference>
<reference key="2">
    <citation type="journal article" date="2009" name="PLoS Biol.">
        <title>Lineage-specific biology revealed by a finished genome assembly of the mouse.</title>
        <authorList>
            <person name="Church D.M."/>
            <person name="Goodstadt L."/>
            <person name="Hillier L.W."/>
            <person name="Zody M.C."/>
            <person name="Goldstein S."/>
            <person name="She X."/>
            <person name="Bult C.J."/>
            <person name="Agarwala R."/>
            <person name="Cherry J.L."/>
            <person name="DiCuccio M."/>
            <person name="Hlavina W."/>
            <person name="Kapustin Y."/>
            <person name="Meric P."/>
            <person name="Maglott D."/>
            <person name="Birtle Z."/>
            <person name="Marques A.C."/>
            <person name="Graves T."/>
            <person name="Zhou S."/>
            <person name="Teague B."/>
            <person name="Potamousis K."/>
            <person name="Churas C."/>
            <person name="Place M."/>
            <person name="Herschleb J."/>
            <person name="Runnheim R."/>
            <person name="Forrest D."/>
            <person name="Amos-Landgraf J."/>
            <person name="Schwartz D.C."/>
            <person name="Cheng Z."/>
            <person name="Lindblad-Toh K."/>
            <person name="Eichler E.E."/>
            <person name="Ponting C.P."/>
        </authorList>
    </citation>
    <scope>NUCLEOTIDE SEQUENCE [LARGE SCALE GENOMIC DNA]</scope>
    <source>
        <strain>C57BL/6J</strain>
    </source>
</reference>
<reference key="3">
    <citation type="journal article" date="2007" name="Proc. Natl. Acad. Sci. U.S.A.">
        <title>Large-scale phosphorylation analysis of mouse liver.</title>
        <authorList>
            <person name="Villen J."/>
            <person name="Beausoleil S.A."/>
            <person name="Gerber S.A."/>
            <person name="Gygi S.P."/>
        </authorList>
    </citation>
    <scope>IDENTIFICATION BY MASS SPECTROMETRY [LARGE SCALE ANALYSIS]</scope>
    <source>
        <tissue>Liver</tissue>
    </source>
</reference>
<reference key="4">
    <citation type="journal article" date="2009" name="Immunity">
        <title>The phagosomal proteome in interferon-gamma-activated macrophages.</title>
        <authorList>
            <person name="Trost M."/>
            <person name="English L."/>
            <person name="Lemieux S."/>
            <person name="Courcelles M."/>
            <person name="Desjardins M."/>
            <person name="Thibault P."/>
        </authorList>
    </citation>
    <scope>IDENTIFICATION BY MASS SPECTROMETRY [LARGE SCALE ANALYSIS]</scope>
</reference>
<reference key="5">
    <citation type="journal article" date="2010" name="Cell">
        <title>A tissue-specific atlas of mouse protein phosphorylation and expression.</title>
        <authorList>
            <person name="Huttlin E.L."/>
            <person name="Jedrychowski M.P."/>
            <person name="Elias J.E."/>
            <person name="Goswami T."/>
            <person name="Rad R."/>
            <person name="Beausoleil S.A."/>
            <person name="Villen J."/>
            <person name="Haas W."/>
            <person name="Sowa M.E."/>
            <person name="Gygi S.P."/>
        </authorList>
    </citation>
    <scope>PHOSPHORYLATION [LARGE SCALE ANALYSIS] AT SER-374</scope>
    <scope>IDENTIFICATION BY MASS SPECTROMETRY [LARGE SCALE ANALYSIS]</scope>
    <source>
        <tissue>Lung</tissue>
        <tissue>Spleen</tissue>
    </source>
</reference>
<name>PRAM_MOUSE</name>